<evidence type="ECO:0000255" key="1">
    <source>
        <dbReference type="HAMAP-Rule" id="MF_00337"/>
    </source>
</evidence>
<evidence type="ECO:0000256" key="2">
    <source>
        <dbReference type="SAM" id="MobiDB-lite"/>
    </source>
</evidence>
<sequence>MAKTATPGACASDPGSGPLPENYEMALAELEALVARMEGGTLSLEDSLAAYRRGAALVAFCQQQLEKAEQQVRVLDGASLKPLSAGTAAADGEDDDL</sequence>
<organism>
    <name type="scientific">Burkholderia mallei (strain NCTC 10229)</name>
    <dbReference type="NCBI Taxonomy" id="412022"/>
    <lineage>
        <taxon>Bacteria</taxon>
        <taxon>Pseudomonadati</taxon>
        <taxon>Pseudomonadota</taxon>
        <taxon>Betaproteobacteria</taxon>
        <taxon>Burkholderiales</taxon>
        <taxon>Burkholderiaceae</taxon>
        <taxon>Burkholderia</taxon>
        <taxon>pseudomallei group</taxon>
    </lineage>
</organism>
<name>EX7S_BURM9</name>
<protein>
    <recommendedName>
        <fullName evidence="1">Exodeoxyribonuclease 7 small subunit</fullName>
        <ecNumber evidence="1">3.1.11.6</ecNumber>
    </recommendedName>
    <alternativeName>
        <fullName evidence="1">Exodeoxyribonuclease VII small subunit</fullName>
        <shortName evidence="1">Exonuclease VII small subunit</shortName>
    </alternativeName>
</protein>
<feature type="chain" id="PRO_1000019571" description="Exodeoxyribonuclease 7 small subunit">
    <location>
        <begin position="1"/>
        <end position="97"/>
    </location>
</feature>
<feature type="region of interest" description="Disordered" evidence="2">
    <location>
        <begin position="1"/>
        <end position="21"/>
    </location>
</feature>
<accession>A2S0N4</accession>
<accession>A2S0N3</accession>
<dbReference type="EC" id="3.1.11.6" evidence="1"/>
<dbReference type="EMBL" id="CP000545">
    <property type="protein sequence ID" value="ABM98973.2"/>
    <property type="molecule type" value="Genomic_DNA"/>
</dbReference>
<dbReference type="RefSeq" id="WP_004190549.1">
    <property type="nucleotide sequence ID" value="NC_008835.1"/>
</dbReference>
<dbReference type="SMR" id="A2S0N4"/>
<dbReference type="KEGG" id="bml:BMA10229_1703"/>
<dbReference type="HOGENOM" id="CLU_145918_2_0_4"/>
<dbReference type="Proteomes" id="UP000002283">
    <property type="component" value="Chromosome II"/>
</dbReference>
<dbReference type="GO" id="GO:0005829">
    <property type="term" value="C:cytosol"/>
    <property type="evidence" value="ECO:0007669"/>
    <property type="project" value="TreeGrafter"/>
</dbReference>
<dbReference type="GO" id="GO:0009318">
    <property type="term" value="C:exodeoxyribonuclease VII complex"/>
    <property type="evidence" value="ECO:0007669"/>
    <property type="project" value="InterPro"/>
</dbReference>
<dbReference type="GO" id="GO:0008855">
    <property type="term" value="F:exodeoxyribonuclease VII activity"/>
    <property type="evidence" value="ECO:0007669"/>
    <property type="project" value="UniProtKB-UniRule"/>
</dbReference>
<dbReference type="GO" id="GO:0006308">
    <property type="term" value="P:DNA catabolic process"/>
    <property type="evidence" value="ECO:0007669"/>
    <property type="project" value="UniProtKB-UniRule"/>
</dbReference>
<dbReference type="Gene3D" id="1.10.287.1040">
    <property type="entry name" value="Exonuclease VII, small subunit"/>
    <property type="match status" value="1"/>
</dbReference>
<dbReference type="HAMAP" id="MF_00337">
    <property type="entry name" value="Exonuc_7_S"/>
    <property type="match status" value="1"/>
</dbReference>
<dbReference type="InterPro" id="IPR003761">
    <property type="entry name" value="Exonuc_VII_S"/>
</dbReference>
<dbReference type="InterPro" id="IPR037004">
    <property type="entry name" value="Exonuc_VII_ssu_sf"/>
</dbReference>
<dbReference type="NCBIfam" id="NF002141">
    <property type="entry name" value="PRK00977.1-5"/>
    <property type="match status" value="1"/>
</dbReference>
<dbReference type="NCBIfam" id="TIGR01280">
    <property type="entry name" value="xseB"/>
    <property type="match status" value="1"/>
</dbReference>
<dbReference type="PANTHER" id="PTHR34137">
    <property type="entry name" value="EXODEOXYRIBONUCLEASE 7 SMALL SUBUNIT"/>
    <property type="match status" value="1"/>
</dbReference>
<dbReference type="PANTHER" id="PTHR34137:SF1">
    <property type="entry name" value="EXODEOXYRIBONUCLEASE 7 SMALL SUBUNIT"/>
    <property type="match status" value="1"/>
</dbReference>
<dbReference type="Pfam" id="PF02609">
    <property type="entry name" value="Exonuc_VII_S"/>
    <property type="match status" value="1"/>
</dbReference>
<dbReference type="SUPFAM" id="SSF116842">
    <property type="entry name" value="XseB-like"/>
    <property type="match status" value="1"/>
</dbReference>
<proteinExistence type="inferred from homology"/>
<keyword id="KW-0963">Cytoplasm</keyword>
<keyword id="KW-0269">Exonuclease</keyword>
<keyword id="KW-0378">Hydrolase</keyword>
<keyword id="KW-0540">Nuclease</keyword>
<gene>
    <name evidence="1" type="primary">xseB</name>
    <name type="ordered locus">BMA10229_1703</name>
</gene>
<comment type="function">
    <text evidence="1">Bidirectionally degrades single-stranded DNA into large acid-insoluble oligonucleotides, which are then degraded further into small acid-soluble oligonucleotides.</text>
</comment>
<comment type="catalytic activity">
    <reaction evidence="1">
        <text>Exonucleolytic cleavage in either 5'- to 3'- or 3'- to 5'-direction to yield nucleoside 5'-phosphates.</text>
        <dbReference type="EC" id="3.1.11.6"/>
    </reaction>
</comment>
<comment type="subunit">
    <text evidence="1">Heterooligomer composed of large and small subunits.</text>
</comment>
<comment type="subcellular location">
    <subcellularLocation>
        <location evidence="1">Cytoplasm</location>
    </subcellularLocation>
</comment>
<comment type="similarity">
    <text evidence="1">Belongs to the XseB family.</text>
</comment>
<reference key="1">
    <citation type="journal article" date="2010" name="Genome Biol. Evol.">
        <title>Continuing evolution of Burkholderia mallei through genome reduction and large-scale rearrangements.</title>
        <authorList>
            <person name="Losada L."/>
            <person name="Ronning C.M."/>
            <person name="DeShazer D."/>
            <person name="Woods D."/>
            <person name="Fedorova N."/>
            <person name="Kim H.S."/>
            <person name="Shabalina S.A."/>
            <person name="Pearson T.R."/>
            <person name="Brinkac L."/>
            <person name="Tan P."/>
            <person name="Nandi T."/>
            <person name="Crabtree J."/>
            <person name="Badger J."/>
            <person name="Beckstrom-Sternberg S."/>
            <person name="Saqib M."/>
            <person name="Schutzer S.E."/>
            <person name="Keim P."/>
            <person name="Nierman W.C."/>
        </authorList>
    </citation>
    <scope>NUCLEOTIDE SEQUENCE [LARGE SCALE GENOMIC DNA]</scope>
    <source>
        <strain>NCTC 10229</strain>
    </source>
</reference>